<reference key="1">
    <citation type="journal article" date="2004" name="Nature">
        <title>The DNA sequence and biology of human chromosome 19.</title>
        <authorList>
            <person name="Grimwood J."/>
            <person name="Gordon L.A."/>
            <person name="Olsen A.S."/>
            <person name="Terry A."/>
            <person name="Schmutz J."/>
            <person name="Lamerdin J.E."/>
            <person name="Hellsten U."/>
            <person name="Goodstein D."/>
            <person name="Couronne O."/>
            <person name="Tran-Gyamfi M."/>
            <person name="Aerts A."/>
            <person name="Altherr M."/>
            <person name="Ashworth L."/>
            <person name="Bajorek E."/>
            <person name="Black S."/>
            <person name="Branscomb E."/>
            <person name="Caenepeel S."/>
            <person name="Carrano A.V."/>
            <person name="Caoile C."/>
            <person name="Chan Y.M."/>
            <person name="Christensen M."/>
            <person name="Cleland C.A."/>
            <person name="Copeland A."/>
            <person name="Dalin E."/>
            <person name="Dehal P."/>
            <person name="Denys M."/>
            <person name="Detter J.C."/>
            <person name="Escobar J."/>
            <person name="Flowers D."/>
            <person name="Fotopulos D."/>
            <person name="Garcia C."/>
            <person name="Georgescu A.M."/>
            <person name="Glavina T."/>
            <person name="Gomez M."/>
            <person name="Gonzales E."/>
            <person name="Groza M."/>
            <person name="Hammon N."/>
            <person name="Hawkins T."/>
            <person name="Haydu L."/>
            <person name="Ho I."/>
            <person name="Huang W."/>
            <person name="Israni S."/>
            <person name="Jett J."/>
            <person name="Kadner K."/>
            <person name="Kimball H."/>
            <person name="Kobayashi A."/>
            <person name="Larionov V."/>
            <person name="Leem S.-H."/>
            <person name="Lopez F."/>
            <person name="Lou Y."/>
            <person name="Lowry S."/>
            <person name="Malfatti S."/>
            <person name="Martinez D."/>
            <person name="McCready P.M."/>
            <person name="Medina C."/>
            <person name="Morgan J."/>
            <person name="Nelson K."/>
            <person name="Nolan M."/>
            <person name="Ovcharenko I."/>
            <person name="Pitluck S."/>
            <person name="Pollard M."/>
            <person name="Popkie A.P."/>
            <person name="Predki P."/>
            <person name="Quan G."/>
            <person name="Ramirez L."/>
            <person name="Rash S."/>
            <person name="Retterer J."/>
            <person name="Rodriguez A."/>
            <person name="Rogers S."/>
            <person name="Salamov A."/>
            <person name="Salazar A."/>
            <person name="She X."/>
            <person name="Smith D."/>
            <person name="Slezak T."/>
            <person name="Solovyev V."/>
            <person name="Thayer N."/>
            <person name="Tice H."/>
            <person name="Tsai M."/>
            <person name="Ustaszewska A."/>
            <person name="Vo N."/>
            <person name="Wagner M."/>
            <person name="Wheeler J."/>
            <person name="Wu K."/>
            <person name="Xie G."/>
            <person name="Yang J."/>
            <person name="Dubchak I."/>
            <person name="Furey T.S."/>
            <person name="DeJong P."/>
            <person name="Dickson M."/>
            <person name="Gordon D."/>
            <person name="Eichler E.E."/>
            <person name="Pennacchio L.A."/>
            <person name="Richardson P."/>
            <person name="Stubbs L."/>
            <person name="Rokhsar D.S."/>
            <person name="Myers R.M."/>
            <person name="Rubin E.M."/>
            <person name="Lucas S.M."/>
        </authorList>
    </citation>
    <scope>NUCLEOTIDE SEQUENCE [LARGE SCALE GENOMIC DNA]</scope>
</reference>
<reference key="2">
    <citation type="journal article" date="2004" name="Genome Res.">
        <title>The status, quality, and expansion of the NIH full-length cDNA project: the Mammalian Gene Collection (MGC).</title>
        <authorList>
            <consortium name="The MGC Project Team"/>
        </authorList>
    </citation>
    <scope>NUCLEOTIDE SEQUENCE [LARGE SCALE MRNA] OF 2-132</scope>
    <source>
        <tissue>Cervix</tissue>
    </source>
</reference>
<reference key="3">
    <citation type="journal article" date="2004" name="Nat. Genet.">
        <title>Complete sequencing and characterization of 21,243 full-length human cDNAs.</title>
        <authorList>
            <person name="Ota T."/>
            <person name="Suzuki Y."/>
            <person name="Nishikawa T."/>
            <person name="Otsuki T."/>
            <person name="Sugiyama T."/>
            <person name="Irie R."/>
            <person name="Wakamatsu A."/>
            <person name="Hayashi K."/>
            <person name="Sato H."/>
            <person name="Nagai K."/>
            <person name="Kimura K."/>
            <person name="Makita H."/>
            <person name="Sekine M."/>
            <person name="Obayashi M."/>
            <person name="Nishi T."/>
            <person name="Shibahara T."/>
            <person name="Tanaka T."/>
            <person name="Ishii S."/>
            <person name="Yamamoto J."/>
            <person name="Saito K."/>
            <person name="Kawai Y."/>
            <person name="Isono Y."/>
            <person name="Nakamura Y."/>
            <person name="Nagahari K."/>
            <person name="Murakami K."/>
            <person name="Yasuda T."/>
            <person name="Iwayanagi T."/>
            <person name="Wagatsuma M."/>
            <person name="Shiratori A."/>
            <person name="Sudo H."/>
            <person name="Hosoiri T."/>
            <person name="Kaku Y."/>
            <person name="Kodaira H."/>
            <person name="Kondo H."/>
            <person name="Sugawara M."/>
            <person name="Takahashi M."/>
            <person name="Kanda K."/>
            <person name="Yokoi T."/>
            <person name="Furuya T."/>
            <person name="Kikkawa E."/>
            <person name="Omura Y."/>
            <person name="Abe K."/>
            <person name="Kamihara K."/>
            <person name="Katsuta N."/>
            <person name="Sato K."/>
            <person name="Tanikawa M."/>
            <person name="Yamazaki M."/>
            <person name="Ninomiya K."/>
            <person name="Ishibashi T."/>
            <person name="Yamashita H."/>
            <person name="Murakawa K."/>
            <person name="Fujimori K."/>
            <person name="Tanai H."/>
            <person name="Kimata M."/>
            <person name="Watanabe M."/>
            <person name="Hiraoka S."/>
            <person name="Chiba Y."/>
            <person name="Ishida S."/>
            <person name="Ono Y."/>
            <person name="Takiguchi S."/>
            <person name="Watanabe S."/>
            <person name="Yosida M."/>
            <person name="Hotuta T."/>
            <person name="Kusano J."/>
            <person name="Kanehori K."/>
            <person name="Takahashi-Fujii A."/>
            <person name="Hara H."/>
            <person name="Tanase T.-O."/>
            <person name="Nomura Y."/>
            <person name="Togiya S."/>
            <person name="Komai F."/>
            <person name="Hara R."/>
            <person name="Takeuchi K."/>
            <person name="Arita M."/>
            <person name="Imose N."/>
            <person name="Musashino K."/>
            <person name="Yuuki H."/>
            <person name="Oshima A."/>
            <person name="Sasaki N."/>
            <person name="Aotsuka S."/>
            <person name="Yoshikawa Y."/>
            <person name="Matsunawa H."/>
            <person name="Ichihara T."/>
            <person name="Shiohata N."/>
            <person name="Sano S."/>
            <person name="Moriya S."/>
            <person name="Momiyama H."/>
            <person name="Satoh N."/>
            <person name="Takami S."/>
            <person name="Terashima Y."/>
            <person name="Suzuki O."/>
            <person name="Nakagawa S."/>
            <person name="Senoh A."/>
            <person name="Mizoguchi H."/>
            <person name="Goto Y."/>
            <person name="Shimizu F."/>
            <person name="Wakebe H."/>
            <person name="Hishigaki H."/>
            <person name="Watanabe T."/>
            <person name="Sugiyama A."/>
            <person name="Takemoto M."/>
            <person name="Kawakami B."/>
            <person name="Yamazaki M."/>
            <person name="Watanabe K."/>
            <person name="Kumagai A."/>
            <person name="Itakura S."/>
            <person name="Fukuzumi Y."/>
            <person name="Fujimori Y."/>
            <person name="Komiyama M."/>
            <person name="Tashiro H."/>
            <person name="Tanigami A."/>
            <person name="Fujiwara T."/>
            <person name="Ono T."/>
            <person name="Yamada K."/>
            <person name="Fujii Y."/>
            <person name="Ozaki K."/>
            <person name="Hirao M."/>
            <person name="Ohmori Y."/>
            <person name="Kawabata A."/>
            <person name="Hikiji T."/>
            <person name="Kobatake N."/>
            <person name="Inagaki H."/>
            <person name="Ikema Y."/>
            <person name="Okamoto S."/>
            <person name="Okitani R."/>
            <person name="Kawakami T."/>
            <person name="Noguchi S."/>
            <person name="Itoh T."/>
            <person name="Shigeta K."/>
            <person name="Senba T."/>
            <person name="Matsumura K."/>
            <person name="Nakajima Y."/>
            <person name="Mizuno T."/>
            <person name="Morinaga M."/>
            <person name="Sasaki M."/>
            <person name="Togashi T."/>
            <person name="Oyama M."/>
            <person name="Hata H."/>
            <person name="Watanabe M."/>
            <person name="Komatsu T."/>
            <person name="Mizushima-Sugano J."/>
            <person name="Satoh T."/>
            <person name="Shirai Y."/>
            <person name="Takahashi Y."/>
            <person name="Nakagawa K."/>
            <person name="Okumura K."/>
            <person name="Nagase T."/>
            <person name="Nomura N."/>
            <person name="Kikuchi H."/>
            <person name="Masuho Y."/>
            <person name="Yamashita R."/>
            <person name="Nakai K."/>
            <person name="Yada T."/>
            <person name="Nakamura Y."/>
            <person name="Ohara O."/>
            <person name="Isogai T."/>
            <person name="Sugano S."/>
        </authorList>
    </citation>
    <scope>NUCLEOTIDE SEQUENCE [LARGE SCALE MRNA] OF 94-132</scope>
    <source>
        <tissue>Carcinoma</tissue>
    </source>
</reference>
<reference key="4">
    <citation type="journal article" date="2006" name="Cell">
        <title>Global, in vivo, and site-specific phosphorylation dynamics in signaling networks.</title>
        <authorList>
            <person name="Olsen J.V."/>
            <person name="Blagoev B."/>
            <person name="Gnad F."/>
            <person name="Macek B."/>
            <person name="Kumar C."/>
            <person name="Mortensen P."/>
            <person name="Mann M."/>
        </authorList>
    </citation>
    <scope>PHOSPHORYLATION [LARGE SCALE ANALYSIS] AT SER-117 AND SER-120</scope>
    <scope>IDENTIFICATION BY MASS SPECTROMETRY [LARGE SCALE ANALYSIS]</scope>
    <source>
        <tissue>Cervix carcinoma</tissue>
    </source>
</reference>
<reference key="5">
    <citation type="journal article" date="2008" name="Proc. Natl. Acad. Sci. U.S.A.">
        <title>A quantitative atlas of mitotic phosphorylation.</title>
        <authorList>
            <person name="Dephoure N."/>
            <person name="Zhou C."/>
            <person name="Villen J."/>
            <person name="Beausoleil S.A."/>
            <person name="Bakalarski C.E."/>
            <person name="Elledge S.J."/>
            <person name="Gygi S.P."/>
        </authorList>
    </citation>
    <scope>PHOSPHORYLATION [LARGE SCALE ANALYSIS] AT SER-117 AND SER-120</scope>
    <scope>IDENTIFICATION BY MASS SPECTROMETRY [LARGE SCALE ANALYSIS]</scope>
    <source>
        <tissue>Cervix carcinoma</tissue>
    </source>
</reference>
<reference key="6">
    <citation type="journal article" date="2010" name="Sci. Signal.">
        <title>Quantitative phosphoproteomics reveals widespread full phosphorylation site occupancy during mitosis.</title>
        <authorList>
            <person name="Olsen J.V."/>
            <person name="Vermeulen M."/>
            <person name="Santamaria A."/>
            <person name="Kumar C."/>
            <person name="Miller M.L."/>
            <person name="Jensen L.J."/>
            <person name="Gnad F."/>
            <person name="Cox J."/>
            <person name="Jensen T.S."/>
            <person name="Nigg E.A."/>
            <person name="Brunak S."/>
            <person name="Mann M."/>
        </authorList>
    </citation>
    <scope>PHOSPHORYLATION [LARGE SCALE ANALYSIS] AT THR-113; SER-117 AND SER-120</scope>
    <scope>IDENTIFICATION BY MASS SPECTROMETRY [LARGE SCALE ANALYSIS]</scope>
    <source>
        <tissue>Cervix carcinoma</tissue>
    </source>
</reference>
<keyword id="KW-0325">Glycoprotein</keyword>
<keyword id="KW-0472">Membrane</keyword>
<keyword id="KW-0597">Phosphoprotein</keyword>
<keyword id="KW-1267">Proteomics identification</keyword>
<keyword id="KW-1185">Reference proteome</keyword>
<keyword id="KW-0732">Signal</keyword>
<keyword id="KW-0812">Transmembrane</keyword>
<keyword id="KW-1133">Transmembrane helix</keyword>
<sequence>MGPRVLQPPLLLLLLALLLAALPCGAEEASPLRPAQVTLSPPPAVTNGSQPGAPHNSTHTRPPGASGSALTRSFYVILGFCGLTALYFLIRAFRLKKPQRRRYGLLANTEDPTEMASLDSDEETVFESRNLR</sequence>
<dbReference type="EMBL" id="AC004258">
    <property type="status" value="NOT_ANNOTATED_CDS"/>
    <property type="molecule type" value="Genomic_DNA"/>
</dbReference>
<dbReference type="EMBL" id="BC000890">
    <property type="protein sequence ID" value="AAH00890.2"/>
    <property type="molecule type" value="mRNA"/>
</dbReference>
<dbReference type="EMBL" id="AK000647">
    <property type="protein sequence ID" value="BAA91305.1"/>
    <property type="status" value="ALT_SEQ"/>
    <property type="molecule type" value="mRNA"/>
</dbReference>
<dbReference type="CCDS" id="CCDS12060.2"/>
<dbReference type="RefSeq" id="NP_060384.3">
    <property type="nucleotide sequence ID" value="NM_017914.3"/>
</dbReference>
<dbReference type="SMR" id="Q9BVV8"/>
<dbReference type="BioGRID" id="120341">
    <property type="interactions" value="5"/>
</dbReference>
<dbReference type="FunCoup" id="Q9BVV8">
    <property type="interactions" value="95"/>
</dbReference>
<dbReference type="IntAct" id="Q9BVV8">
    <property type="interactions" value="9"/>
</dbReference>
<dbReference type="STRING" id="9606.ENSP00000386557"/>
<dbReference type="GlyCosmos" id="Q9BVV8">
    <property type="glycosylation" value="1 site, No reported glycans"/>
</dbReference>
<dbReference type="GlyGen" id="Q9BVV8">
    <property type="glycosylation" value="2 sites, 1 N-linked glycan (1 site)"/>
</dbReference>
<dbReference type="iPTMnet" id="Q9BVV8"/>
<dbReference type="PhosphoSitePlus" id="Q9BVV8"/>
<dbReference type="BioMuta" id="C19orf24"/>
<dbReference type="DMDM" id="294862428"/>
<dbReference type="jPOST" id="Q9BVV8"/>
<dbReference type="MassIVE" id="Q9BVV8"/>
<dbReference type="PaxDb" id="9606-ENSP00000386557"/>
<dbReference type="PeptideAtlas" id="Q9BVV8"/>
<dbReference type="ProteomicsDB" id="79239"/>
<dbReference type="Antibodypedia" id="22649">
    <property type="antibodies" value="55 antibodies from 14 providers"/>
</dbReference>
<dbReference type="DNASU" id="55009"/>
<dbReference type="Ensembl" id="ENST00000409293.6">
    <property type="protein sequence ID" value="ENSP00000386557.3"/>
    <property type="gene ID" value="ENSG00000228300.14"/>
</dbReference>
<dbReference type="GeneID" id="55009"/>
<dbReference type="KEGG" id="hsa:55009"/>
<dbReference type="MANE-Select" id="ENST00000409293.6">
    <property type="protein sequence ID" value="ENSP00000386557.3"/>
    <property type="RefSeq nucleotide sequence ID" value="NM_017914.4"/>
    <property type="RefSeq protein sequence ID" value="NP_060384.3"/>
</dbReference>
<dbReference type="UCSC" id="uc002lrw.5">
    <property type="organism name" value="human"/>
</dbReference>
<dbReference type="AGR" id="HGNC:26073"/>
<dbReference type="CTD" id="55009"/>
<dbReference type="DisGeNET" id="55009"/>
<dbReference type="GeneCards" id="FAM174C"/>
<dbReference type="HGNC" id="HGNC:26073">
    <property type="gene designation" value="FAM174C"/>
</dbReference>
<dbReference type="HPA" id="ENSG00000228300">
    <property type="expression patterns" value="Low tissue specificity"/>
</dbReference>
<dbReference type="neXtProt" id="NX_Q9BVV8"/>
<dbReference type="OpenTargets" id="ENSG00000228300"/>
<dbReference type="VEuPathDB" id="HostDB:ENSG00000228300"/>
<dbReference type="eggNOG" id="KOG3858">
    <property type="taxonomic scope" value="Eukaryota"/>
</dbReference>
<dbReference type="GeneTree" id="ENSGT00530000064649"/>
<dbReference type="HOGENOM" id="CLU_141994_0_0_1"/>
<dbReference type="InParanoid" id="Q9BVV8"/>
<dbReference type="OMA" id="TEMTSMD"/>
<dbReference type="OrthoDB" id="5917722at2759"/>
<dbReference type="PAN-GO" id="Q9BVV8">
    <property type="GO annotations" value="1 GO annotation based on evolutionary models"/>
</dbReference>
<dbReference type="PhylomeDB" id="Q9BVV8"/>
<dbReference type="TreeFam" id="TF339572"/>
<dbReference type="PathwayCommons" id="Q9BVV8"/>
<dbReference type="SignaLink" id="Q9BVV8"/>
<dbReference type="BioGRID-ORCS" id="55009">
    <property type="hits" value="30 hits in 1141 CRISPR screens"/>
</dbReference>
<dbReference type="GenomeRNAi" id="55009"/>
<dbReference type="Pharos" id="Q9BVV8">
    <property type="development level" value="Tdark"/>
</dbReference>
<dbReference type="PRO" id="PR:Q9BVV8"/>
<dbReference type="Proteomes" id="UP000005640">
    <property type="component" value="Chromosome 19"/>
</dbReference>
<dbReference type="RNAct" id="Q9BVV8">
    <property type="molecule type" value="protein"/>
</dbReference>
<dbReference type="Bgee" id="ENSG00000228300">
    <property type="expression patterns" value="Expressed in mucosa of transverse colon and 164 other cell types or tissues"/>
</dbReference>
<dbReference type="ExpressionAtlas" id="Q9BVV8">
    <property type="expression patterns" value="baseline and differential"/>
</dbReference>
<dbReference type="GO" id="GO:0005737">
    <property type="term" value="C:cytoplasm"/>
    <property type="evidence" value="ECO:0000314"/>
    <property type="project" value="HGNC-UCL"/>
</dbReference>
<dbReference type="GO" id="GO:0005576">
    <property type="term" value="C:extracellular region"/>
    <property type="evidence" value="ECO:0000314"/>
    <property type="project" value="BHF-UCL"/>
</dbReference>
<dbReference type="GO" id="GO:0016020">
    <property type="term" value="C:membrane"/>
    <property type="evidence" value="ECO:0007669"/>
    <property type="project" value="UniProtKB-SubCell"/>
</dbReference>
<dbReference type="InterPro" id="IPR009565">
    <property type="entry name" value="FAM174-like"/>
</dbReference>
<dbReference type="PANTHER" id="PTHR28607">
    <property type="entry name" value="EXPRESSED PROTEIN"/>
    <property type="match status" value="1"/>
</dbReference>
<dbReference type="PANTHER" id="PTHR28607:SF2">
    <property type="entry name" value="PROTEIN FAM174C"/>
    <property type="match status" value="1"/>
</dbReference>
<dbReference type="Pfam" id="PF06679">
    <property type="entry name" value="DUF1180"/>
    <property type="match status" value="1"/>
</dbReference>
<evidence type="ECO:0000255" key="1"/>
<evidence type="ECO:0000256" key="2">
    <source>
        <dbReference type="SAM" id="MobiDB-lite"/>
    </source>
</evidence>
<evidence type="ECO:0000305" key="3"/>
<evidence type="ECO:0000312" key="4">
    <source>
        <dbReference type="HGNC" id="HGNC:26073"/>
    </source>
</evidence>
<evidence type="ECO:0007744" key="5">
    <source>
    </source>
</evidence>
<evidence type="ECO:0007744" key="6">
    <source>
    </source>
</evidence>
<evidence type="ECO:0007744" key="7">
    <source>
    </source>
</evidence>
<accession>Q9BVV8</accession>
<accession>Q9NWS2</accession>
<organism>
    <name type="scientific">Homo sapiens</name>
    <name type="common">Human</name>
    <dbReference type="NCBI Taxonomy" id="9606"/>
    <lineage>
        <taxon>Eukaryota</taxon>
        <taxon>Metazoa</taxon>
        <taxon>Chordata</taxon>
        <taxon>Craniata</taxon>
        <taxon>Vertebrata</taxon>
        <taxon>Euteleostomi</taxon>
        <taxon>Mammalia</taxon>
        <taxon>Eutheria</taxon>
        <taxon>Euarchontoglires</taxon>
        <taxon>Primates</taxon>
        <taxon>Haplorrhini</taxon>
        <taxon>Catarrhini</taxon>
        <taxon>Hominidae</taxon>
        <taxon>Homo</taxon>
    </lineage>
</organism>
<gene>
    <name evidence="4" type="primary">FAM174C</name>
    <name type="synonym">C19orf24</name>
</gene>
<comment type="subcellular location">
    <subcellularLocation>
        <location evidence="3">Membrane</location>
        <topology evidence="3">Single-pass type I membrane protein</topology>
    </subcellularLocation>
</comment>
<comment type="similarity">
    <text evidence="3">Belongs to the FAM174 family.</text>
</comment>
<comment type="sequence caution" evidence="3">
    <conflict type="miscellaneous discrepancy">
        <sequence resource="EMBL-CDS" id="BAA91305"/>
    </conflict>
</comment>
<name>F174C_HUMAN</name>
<feature type="signal peptide" evidence="1">
    <location>
        <begin position="1"/>
        <end position="26"/>
    </location>
</feature>
<feature type="chain" id="PRO_0000079385" description="Protein FAM174C">
    <location>
        <begin position="27"/>
        <end position="132"/>
    </location>
</feature>
<feature type="transmembrane region" description="Helical" evidence="1">
    <location>
        <begin position="73"/>
        <end position="93"/>
    </location>
</feature>
<feature type="region of interest" description="Disordered" evidence="2">
    <location>
        <begin position="34"/>
        <end position="66"/>
    </location>
</feature>
<feature type="region of interest" description="Disordered" evidence="2">
    <location>
        <begin position="113"/>
        <end position="132"/>
    </location>
</feature>
<feature type="compositionally biased region" description="Polar residues" evidence="2">
    <location>
        <begin position="46"/>
        <end position="60"/>
    </location>
</feature>
<feature type="modified residue" description="Phosphothreonine" evidence="7">
    <location>
        <position position="113"/>
    </location>
</feature>
<feature type="modified residue" description="Phosphoserine" evidence="5 6 7">
    <location>
        <position position="117"/>
    </location>
</feature>
<feature type="modified residue" description="Phosphoserine" evidence="5 6 7">
    <location>
        <position position="120"/>
    </location>
</feature>
<feature type="glycosylation site" description="N-linked (GlcNAc...) asparagine" evidence="1">
    <location>
        <position position="47"/>
    </location>
</feature>
<proteinExistence type="evidence at protein level"/>
<protein>
    <recommendedName>
        <fullName evidence="3">Protein FAM174C</fullName>
    </recommendedName>
</protein>